<gene>
    <name evidence="1" type="primary">rplC</name>
    <name type="ordered locus">Ppha_0289</name>
</gene>
<reference key="1">
    <citation type="submission" date="2008-06" db="EMBL/GenBank/DDBJ databases">
        <title>Complete sequence of Pelodictyon phaeoclathratiforme BU-1.</title>
        <authorList>
            <consortium name="US DOE Joint Genome Institute"/>
            <person name="Lucas S."/>
            <person name="Copeland A."/>
            <person name="Lapidus A."/>
            <person name="Glavina del Rio T."/>
            <person name="Dalin E."/>
            <person name="Tice H."/>
            <person name="Bruce D."/>
            <person name="Goodwin L."/>
            <person name="Pitluck S."/>
            <person name="Schmutz J."/>
            <person name="Larimer F."/>
            <person name="Land M."/>
            <person name="Hauser L."/>
            <person name="Kyrpides N."/>
            <person name="Mikhailova N."/>
            <person name="Liu Z."/>
            <person name="Li T."/>
            <person name="Zhao F."/>
            <person name="Overmann J."/>
            <person name="Bryant D.A."/>
            <person name="Richardson P."/>
        </authorList>
    </citation>
    <scope>NUCLEOTIDE SEQUENCE [LARGE SCALE GENOMIC DNA]</scope>
    <source>
        <strain>DSM 5477 / BU-1</strain>
    </source>
</reference>
<sequence length="209" mass="22637">MGAILGKKIGMTRLFNEKREAVSCTIIQAGPCFVTQVKRADKEGYDAYQIGIGERKEKKVSKPLQGHYKKAGVAPGFKLAEFDFKELNQELELGSAVSVESFTEGEKVNVLGVSKGKGFAGVMKRHNFSGGQRTHGQSDRQRAPGSVGGSSDPSRVFKGTRMAGRMGSDNITVRNLVIFKIMPESNLIVIKGSVPGPKNSYVKIVSTKK</sequence>
<protein>
    <recommendedName>
        <fullName evidence="1">Large ribosomal subunit protein uL3</fullName>
    </recommendedName>
    <alternativeName>
        <fullName evidence="3">50S ribosomal protein L3</fullName>
    </alternativeName>
</protein>
<accession>B4SBU7</accession>
<feature type="chain" id="PRO_1000141896" description="Large ribosomal subunit protein uL3">
    <location>
        <begin position="1"/>
        <end position="209"/>
    </location>
</feature>
<feature type="region of interest" description="Disordered" evidence="2">
    <location>
        <begin position="124"/>
        <end position="156"/>
    </location>
</feature>
<name>RL3_PELPB</name>
<organism>
    <name type="scientific">Pelodictyon phaeoclathratiforme (strain DSM 5477 / BU-1)</name>
    <dbReference type="NCBI Taxonomy" id="324925"/>
    <lineage>
        <taxon>Bacteria</taxon>
        <taxon>Pseudomonadati</taxon>
        <taxon>Chlorobiota</taxon>
        <taxon>Chlorobiia</taxon>
        <taxon>Chlorobiales</taxon>
        <taxon>Chlorobiaceae</taxon>
        <taxon>Chlorobium/Pelodictyon group</taxon>
        <taxon>Pelodictyon</taxon>
    </lineage>
</organism>
<keyword id="KW-1185">Reference proteome</keyword>
<keyword id="KW-0687">Ribonucleoprotein</keyword>
<keyword id="KW-0689">Ribosomal protein</keyword>
<keyword id="KW-0694">RNA-binding</keyword>
<keyword id="KW-0699">rRNA-binding</keyword>
<proteinExistence type="inferred from homology"/>
<comment type="function">
    <text evidence="1">One of the primary rRNA binding proteins, it binds directly near the 3'-end of the 23S rRNA, where it nucleates assembly of the 50S subunit.</text>
</comment>
<comment type="subunit">
    <text evidence="1">Part of the 50S ribosomal subunit. Forms a cluster with proteins L14 and L19.</text>
</comment>
<comment type="similarity">
    <text evidence="1">Belongs to the universal ribosomal protein uL3 family.</text>
</comment>
<evidence type="ECO:0000255" key="1">
    <source>
        <dbReference type="HAMAP-Rule" id="MF_01325"/>
    </source>
</evidence>
<evidence type="ECO:0000256" key="2">
    <source>
        <dbReference type="SAM" id="MobiDB-lite"/>
    </source>
</evidence>
<evidence type="ECO:0000305" key="3"/>
<dbReference type="EMBL" id="CP001110">
    <property type="protein sequence ID" value="ACF42622.1"/>
    <property type="molecule type" value="Genomic_DNA"/>
</dbReference>
<dbReference type="RefSeq" id="WP_012507118.1">
    <property type="nucleotide sequence ID" value="NC_011060.1"/>
</dbReference>
<dbReference type="SMR" id="B4SBU7"/>
<dbReference type="STRING" id="324925.Ppha_0289"/>
<dbReference type="KEGG" id="pph:Ppha_0289"/>
<dbReference type="eggNOG" id="COG0087">
    <property type="taxonomic scope" value="Bacteria"/>
</dbReference>
<dbReference type="HOGENOM" id="CLU_044142_4_1_10"/>
<dbReference type="OrthoDB" id="9806135at2"/>
<dbReference type="Proteomes" id="UP000002724">
    <property type="component" value="Chromosome"/>
</dbReference>
<dbReference type="GO" id="GO:0022625">
    <property type="term" value="C:cytosolic large ribosomal subunit"/>
    <property type="evidence" value="ECO:0007669"/>
    <property type="project" value="TreeGrafter"/>
</dbReference>
<dbReference type="GO" id="GO:0019843">
    <property type="term" value="F:rRNA binding"/>
    <property type="evidence" value="ECO:0007669"/>
    <property type="project" value="UniProtKB-UniRule"/>
</dbReference>
<dbReference type="GO" id="GO:0003735">
    <property type="term" value="F:structural constituent of ribosome"/>
    <property type="evidence" value="ECO:0007669"/>
    <property type="project" value="InterPro"/>
</dbReference>
<dbReference type="GO" id="GO:0006412">
    <property type="term" value="P:translation"/>
    <property type="evidence" value="ECO:0007669"/>
    <property type="project" value="UniProtKB-UniRule"/>
</dbReference>
<dbReference type="FunFam" id="2.40.30.10:FF:000047">
    <property type="entry name" value="50S ribosomal protein L3"/>
    <property type="match status" value="1"/>
</dbReference>
<dbReference type="FunFam" id="3.30.160.810:FF:000001">
    <property type="entry name" value="50S ribosomal protein L3"/>
    <property type="match status" value="1"/>
</dbReference>
<dbReference type="Gene3D" id="3.30.160.810">
    <property type="match status" value="1"/>
</dbReference>
<dbReference type="Gene3D" id="2.40.30.10">
    <property type="entry name" value="Translation factors"/>
    <property type="match status" value="1"/>
</dbReference>
<dbReference type="HAMAP" id="MF_01325_B">
    <property type="entry name" value="Ribosomal_uL3_B"/>
    <property type="match status" value="1"/>
</dbReference>
<dbReference type="InterPro" id="IPR000597">
    <property type="entry name" value="Ribosomal_uL3"/>
</dbReference>
<dbReference type="InterPro" id="IPR019927">
    <property type="entry name" value="Ribosomal_uL3_bac/org-type"/>
</dbReference>
<dbReference type="InterPro" id="IPR019926">
    <property type="entry name" value="Ribosomal_uL3_CS"/>
</dbReference>
<dbReference type="InterPro" id="IPR009000">
    <property type="entry name" value="Transl_B-barrel_sf"/>
</dbReference>
<dbReference type="NCBIfam" id="TIGR03625">
    <property type="entry name" value="L3_bact"/>
    <property type="match status" value="1"/>
</dbReference>
<dbReference type="PANTHER" id="PTHR11229">
    <property type="entry name" value="50S RIBOSOMAL PROTEIN L3"/>
    <property type="match status" value="1"/>
</dbReference>
<dbReference type="PANTHER" id="PTHR11229:SF16">
    <property type="entry name" value="LARGE RIBOSOMAL SUBUNIT PROTEIN UL3C"/>
    <property type="match status" value="1"/>
</dbReference>
<dbReference type="Pfam" id="PF00297">
    <property type="entry name" value="Ribosomal_L3"/>
    <property type="match status" value="1"/>
</dbReference>
<dbReference type="SUPFAM" id="SSF50447">
    <property type="entry name" value="Translation proteins"/>
    <property type="match status" value="1"/>
</dbReference>
<dbReference type="PROSITE" id="PS00474">
    <property type="entry name" value="RIBOSOMAL_L3"/>
    <property type="match status" value="1"/>
</dbReference>